<proteinExistence type="inferred from homology"/>
<name>RS17_ACISJ</name>
<sequence length="89" mass="10181">MTEAKKSLKRTLVGKVVSDKRAKTVTVLVERRVKHPIYDKIMIKSSKYHAHDENGEYKMGDTIEITESRPLSKTKNWVATRLVQKAGLL</sequence>
<reference key="1">
    <citation type="submission" date="2006-12" db="EMBL/GenBank/DDBJ databases">
        <title>Complete sequence of chromosome 1 of Acidovorax sp. JS42.</title>
        <authorList>
            <person name="Copeland A."/>
            <person name="Lucas S."/>
            <person name="Lapidus A."/>
            <person name="Barry K."/>
            <person name="Detter J.C."/>
            <person name="Glavina del Rio T."/>
            <person name="Dalin E."/>
            <person name="Tice H."/>
            <person name="Pitluck S."/>
            <person name="Chertkov O."/>
            <person name="Brettin T."/>
            <person name="Bruce D."/>
            <person name="Han C."/>
            <person name="Tapia R."/>
            <person name="Gilna P."/>
            <person name="Schmutz J."/>
            <person name="Larimer F."/>
            <person name="Land M."/>
            <person name="Hauser L."/>
            <person name="Kyrpides N."/>
            <person name="Kim E."/>
            <person name="Stahl D."/>
            <person name="Richardson P."/>
        </authorList>
    </citation>
    <scope>NUCLEOTIDE SEQUENCE [LARGE SCALE GENOMIC DNA]</scope>
    <source>
        <strain>JS42</strain>
    </source>
</reference>
<gene>
    <name evidence="1" type="primary">rpsQ</name>
    <name type="ordered locus">Ajs_0287</name>
</gene>
<dbReference type="EMBL" id="CP000539">
    <property type="protein sequence ID" value="ABM40541.1"/>
    <property type="molecule type" value="Genomic_DNA"/>
</dbReference>
<dbReference type="SMR" id="A1W2R6"/>
<dbReference type="STRING" id="232721.Ajs_0287"/>
<dbReference type="KEGG" id="ajs:Ajs_0287"/>
<dbReference type="eggNOG" id="COG0186">
    <property type="taxonomic scope" value="Bacteria"/>
</dbReference>
<dbReference type="HOGENOM" id="CLU_073626_1_1_4"/>
<dbReference type="Proteomes" id="UP000000645">
    <property type="component" value="Chromosome"/>
</dbReference>
<dbReference type="GO" id="GO:0022627">
    <property type="term" value="C:cytosolic small ribosomal subunit"/>
    <property type="evidence" value="ECO:0007669"/>
    <property type="project" value="TreeGrafter"/>
</dbReference>
<dbReference type="GO" id="GO:0019843">
    <property type="term" value="F:rRNA binding"/>
    <property type="evidence" value="ECO:0007669"/>
    <property type="project" value="UniProtKB-UniRule"/>
</dbReference>
<dbReference type="GO" id="GO:0003735">
    <property type="term" value="F:structural constituent of ribosome"/>
    <property type="evidence" value="ECO:0007669"/>
    <property type="project" value="InterPro"/>
</dbReference>
<dbReference type="GO" id="GO:0006412">
    <property type="term" value="P:translation"/>
    <property type="evidence" value="ECO:0007669"/>
    <property type="project" value="UniProtKB-UniRule"/>
</dbReference>
<dbReference type="CDD" id="cd00364">
    <property type="entry name" value="Ribosomal_uS17"/>
    <property type="match status" value="1"/>
</dbReference>
<dbReference type="Gene3D" id="2.40.50.140">
    <property type="entry name" value="Nucleic acid-binding proteins"/>
    <property type="match status" value="1"/>
</dbReference>
<dbReference type="HAMAP" id="MF_01345_B">
    <property type="entry name" value="Ribosomal_uS17_B"/>
    <property type="match status" value="1"/>
</dbReference>
<dbReference type="InterPro" id="IPR012340">
    <property type="entry name" value="NA-bd_OB-fold"/>
</dbReference>
<dbReference type="InterPro" id="IPR000266">
    <property type="entry name" value="Ribosomal_uS17"/>
</dbReference>
<dbReference type="InterPro" id="IPR019984">
    <property type="entry name" value="Ribosomal_uS17_bact/chlr"/>
</dbReference>
<dbReference type="InterPro" id="IPR019979">
    <property type="entry name" value="Ribosomal_uS17_CS"/>
</dbReference>
<dbReference type="NCBIfam" id="NF004123">
    <property type="entry name" value="PRK05610.1"/>
    <property type="match status" value="1"/>
</dbReference>
<dbReference type="NCBIfam" id="TIGR03635">
    <property type="entry name" value="uS17_bact"/>
    <property type="match status" value="1"/>
</dbReference>
<dbReference type="PANTHER" id="PTHR10744">
    <property type="entry name" value="40S RIBOSOMAL PROTEIN S11 FAMILY MEMBER"/>
    <property type="match status" value="1"/>
</dbReference>
<dbReference type="PANTHER" id="PTHR10744:SF1">
    <property type="entry name" value="SMALL RIBOSOMAL SUBUNIT PROTEIN US17M"/>
    <property type="match status" value="1"/>
</dbReference>
<dbReference type="Pfam" id="PF00366">
    <property type="entry name" value="Ribosomal_S17"/>
    <property type="match status" value="1"/>
</dbReference>
<dbReference type="PRINTS" id="PR00973">
    <property type="entry name" value="RIBOSOMALS17"/>
</dbReference>
<dbReference type="SUPFAM" id="SSF50249">
    <property type="entry name" value="Nucleic acid-binding proteins"/>
    <property type="match status" value="1"/>
</dbReference>
<dbReference type="PROSITE" id="PS00056">
    <property type="entry name" value="RIBOSOMAL_S17"/>
    <property type="match status" value="1"/>
</dbReference>
<evidence type="ECO:0000255" key="1">
    <source>
        <dbReference type="HAMAP-Rule" id="MF_01345"/>
    </source>
</evidence>
<evidence type="ECO:0000305" key="2"/>
<keyword id="KW-0687">Ribonucleoprotein</keyword>
<keyword id="KW-0689">Ribosomal protein</keyword>
<keyword id="KW-0694">RNA-binding</keyword>
<keyword id="KW-0699">rRNA-binding</keyword>
<feature type="chain" id="PRO_1000054908" description="Small ribosomal subunit protein uS17">
    <location>
        <begin position="1"/>
        <end position="89"/>
    </location>
</feature>
<protein>
    <recommendedName>
        <fullName evidence="1">Small ribosomal subunit protein uS17</fullName>
    </recommendedName>
    <alternativeName>
        <fullName evidence="2">30S ribosomal protein S17</fullName>
    </alternativeName>
</protein>
<organism>
    <name type="scientific">Acidovorax sp. (strain JS42)</name>
    <dbReference type="NCBI Taxonomy" id="232721"/>
    <lineage>
        <taxon>Bacteria</taxon>
        <taxon>Pseudomonadati</taxon>
        <taxon>Pseudomonadota</taxon>
        <taxon>Betaproteobacteria</taxon>
        <taxon>Burkholderiales</taxon>
        <taxon>Comamonadaceae</taxon>
        <taxon>Acidovorax</taxon>
    </lineage>
</organism>
<accession>A1W2R6</accession>
<comment type="function">
    <text evidence="1">One of the primary rRNA binding proteins, it binds specifically to the 5'-end of 16S ribosomal RNA.</text>
</comment>
<comment type="subunit">
    <text evidence="1">Part of the 30S ribosomal subunit.</text>
</comment>
<comment type="similarity">
    <text evidence="1">Belongs to the universal ribosomal protein uS17 family.</text>
</comment>